<sequence length="216" mass="24716">MATDSRTSWLLTVSLLCLLWPQEASAFPAMPLSSLFSNAVLRAQHLHQLAADTYKEFERAYIPEGQRYSIQNAQAAFCFSETIPAPTGKEEAQQRTDMELLRFSLLLIQSWLGPVQFLSRIFTNSLMFGTSDRVYEKLKDLEEGIQALMQELEDGSPRVGQILKQTYDKFDANMRSDDALLKNYGLLSCFKKDLHKAETYLRVMKCRRFVESSCAF</sequence>
<gene>
    <name type="primary">Gh1</name>
    <name type="synonym">Gh</name>
</gene>
<proteinExistence type="evidence at transcript level"/>
<reference key="1">
    <citation type="journal article" date="1985" name="J. Biol. Chem.">
        <title>Nucleotide sequence of mouse prolactin and growth hormone mRNAs and expression of these mRNAs during pregnancy.</title>
        <authorList>
            <person name="Linzer D.I.H."/>
            <person name="Talamantes F."/>
        </authorList>
    </citation>
    <scope>NUCLEOTIDE SEQUENCE [MRNA]</scope>
</reference>
<reference key="2">
    <citation type="journal article" date="1996" name="Gene">
        <title>Structure of the growth hormone-encoding gene and its promoter in mice.</title>
        <authorList>
            <person name="Das P."/>
            <person name="Meyer L."/>
            <person name="Seyfert H.-M."/>
            <person name="Brockmann G."/>
            <person name="Schwerin M."/>
        </authorList>
    </citation>
    <scope>NUCLEOTIDE SEQUENCE [GENOMIC DNA]</scope>
    <source>
        <strain>FZTDU</strain>
        <tissue>Liver</tissue>
    </source>
</reference>
<reference key="3">
    <citation type="journal article" date="2005" name="Science">
        <title>The transcriptional landscape of the mammalian genome.</title>
        <authorList>
            <person name="Carninci P."/>
            <person name="Kasukawa T."/>
            <person name="Katayama S."/>
            <person name="Gough J."/>
            <person name="Frith M.C."/>
            <person name="Maeda N."/>
            <person name="Oyama R."/>
            <person name="Ravasi T."/>
            <person name="Lenhard B."/>
            <person name="Wells C."/>
            <person name="Kodzius R."/>
            <person name="Shimokawa K."/>
            <person name="Bajic V.B."/>
            <person name="Brenner S.E."/>
            <person name="Batalov S."/>
            <person name="Forrest A.R."/>
            <person name="Zavolan M."/>
            <person name="Davis M.J."/>
            <person name="Wilming L.G."/>
            <person name="Aidinis V."/>
            <person name="Allen J.E."/>
            <person name="Ambesi-Impiombato A."/>
            <person name="Apweiler R."/>
            <person name="Aturaliya R.N."/>
            <person name="Bailey T.L."/>
            <person name="Bansal M."/>
            <person name="Baxter L."/>
            <person name="Beisel K.W."/>
            <person name="Bersano T."/>
            <person name="Bono H."/>
            <person name="Chalk A.M."/>
            <person name="Chiu K.P."/>
            <person name="Choudhary V."/>
            <person name="Christoffels A."/>
            <person name="Clutterbuck D.R."/>
            <person name="Crowe M.L."/>
            <person name="Dalla E."/>
            <person name="Dalrymple B.P."/>
            <person name="de Bono B."/>
            <person name="Della Gatta G."/>
            <person name="di Bernardo D."/>
            <person name="Down T."/>
            <person name="Engstrom P."/>
            <person name="Fagiolini M."/>
            <person name="Faulkner G."/>
            <person name="Fletcher C.F."/>
            <person name="Fukushima T."/>
            <person name="Furuno M."/>
            <person name="Futaki S."/>
            <person name="Gariboldi M."/>
            <person name="Georgii-Hemming P."/>
            <person name="Gingeras T.R."/>
            <person name="Gojobori T."/>
            <person name="Green R.E."/>
            <person name="Gustincich S."/>
            <person name="Harbers M."/>
            <person name="Hayashi Y."/>
            <person name="Hensch T.K."/>
            <person name="Hirokawa N."/>
            <person name="Hill D."/>
            <person name="Huminiecki L."/>
            <person name="Iacono M."/>
            <person name="Ikeo K."/>
            <person name="Iwama A."/>
            <person name="Ishikawa T."/>
            <person name="Jakt M."/>
            <person name="Kanapin A."/>
            <person name="Katoh M."/>
            <person name="Kawasawa Y."/>
            <person name="Kelso J."/>
            <person name="Kitamura H."/>
            <person name="Kitano H."/>
            <person name="Kollias G."/>
            <person name="Krishnan S.P."/>
            <person name="Kruger A."/>
            <person name="Kummerfeld S.K."/>
            <person name="Kurochkin I.V."/>
            <person name="Lareau L.F."/>
            <person name="Lazarevic D."/>
            <person name="Lipovich L."/>
            <person name="Liu J."/>
            <person name="Liuni S."/>
            <person name="McWilliam S."/>
            <person name="Madan Babu M."/>
            <person name="Madera M."/>
            <person name="Marchionni L."/>
            <person name="Matsuda H."/>
            <person name="Matsuzawa S."/>
            <person name="Miki H."/>
            <person name="Mignone F."/>
            <person name="Miyake S."/>
            <person name="Morris K."/>
            <person name="Mottagui-Tabar S."/>
            <person name="Mulder N."/>
            <person name="Nakano N."/>
            <person name="Nakauchi H."/>
            <person name="Ng P."/>
            <person name="Nilsson R."/>
            <person name="Nishiguchi S."/>
            <person name="Nishikawa S."/>
            <person name="Nori F."/>
            <person name="Ohara O."/>
            <person name="Okazaki Y."/>
            <person name="Orlando V."/>
            <person name="Pang K.C."/>
            <person name="Pavan W.J."/>
            <person name="Pavesi G."/>
            <person name="Pesole G."/>
            <person name="Petrovsky N."/>
            <person name="Piazza S."/>
            <person name="Reed J."/>
            <person name="Reid J.F."/>
            <person name="Ring B.Z."/>
            <person name="Ringwald M."/>
            <person name="Rost B."/>
            <person name="Ruan Y."/>
            <person name="Salzberg S.L."/>
            <person name="Sandelin A."/>
            <person name="Schneider C."/>
            <person name="Schoenbach C."/>
            <person name="Sekiguchi K."/>
            <person name="Semple C.A."/>
            <person name="Seno S."/>
            <person name="Sessa L."/>
            <person name="Sheng Y."/>
            <person name="Shibata Y."/>
            <person name="Shimada H."/>
            <person name="Shimada K."/>
            <person name="Silva D."/>
            <person name="Sinclair B."/>
            <person name="Sperling S."/>
            <person name="Stupka E."/>
            <person name="Sugiura K."/>
            <person name="Sultana R."/>
            <person name="Takenaka Y."/>
            <person name="Taki K."/>
            <person name="Tammoja K."/>
            <person name="Tan S.L."/>
            <person name="Tang S."/>
            <person name="Taylor M.S."/>
            <person name="Tegner J."/>
            <person name="Teichmann S.A."/>
            <person name="Ueda H.R."/>
            <person name="van Nimwegen E."/>
            <person name="Verardo R."/>
            <person name="Wei C.L."/>
            <person name="Yagi K."/>
            <person name="Yamanishi H."/>
            <person name="Zabarovsky E."/>
            <person name="Zhu S."/>
            <person name="Zimmer A."/>
            <person name="Hide W."/>
            <person name="Bult C."/>
            <person name="Grimmond S.M."/>
            <person name="Teasdale R.D."/>
            <person name="Liu E.T."/>
            <person name="Brusic V."/>
            <person name="Quackenbush J."/>
            <person name="Wahlestedt C."/>
            <person name="Mattick J.S."/>
            <person name="Hume D.A."/>
            <person name="Kai C."/>
            <person name="Sasaki D."/>
            <person name="Tomaru Y."/>
            <person name="Fukuda S."/>
            <person name="Kanamori-Katayama M."/>
            <person name="Suzuki M."/>
            <person name="Aoki J."/>
            <person name="Arakawa T."/>
            <person name="Iida J."/>
            <person name="Imamura K."/>
            <person name="Itoh M."/>
            <person name="Kato T."/>
            <person name="Kawaji H."/>
            <person name="Kawagashira N."/>
            <person name="Kawashima T."/>
            <person name="Kojima M."/>
            <person name="Kondo S."/>
            <person name="Konno H."/>
            <person name="Nakano K."/>
            <person name="Ninomiya N."/>
            <person name="Nishio T."/>
            <person name="Okada M."/>
            <person name="Plessy C."/>
            <person name="Shibata K."/>
            <person name="Shiraki T."/>
            <person name="Suzuki S."/>
            <person name="Tagami M."/>
            <person name="Waki K."/>
            <person name="Watahiki A."/>
            <person name="Okamura-Oho Y."/>
            <person name="Suzuki H."/>
            <person name="Kawai J."/>
            <person name="Hayashizaki Y."/>
        </authorList>
    </citation>
    <scope>NUCLEOTIDE SEQUENCE [LARGE SCALE MRNA]</scope>
    <source>
        <strain>C57BL/6J</strain>
    </source>
</reference>
<reference key="4">
    <citation type="journal article" date="2004" name="Genome Res.">
        <title>The status, quality, and expansion of the NIH full-length cDNA project: the Mammalian Gene Collection (MGC).</title>
        <authorList>
            <consortium name="The MGC Project Team"/>
        </authorList>
    </citation>
    <scope>NUCLEOTIDE SEQUENCE [LARGE SCALE MRNA]</scope>
    <source>
        <tissue>Pituitary</tissue>
    </source>
</reference>
<accession>P06880</accession>
<accession>Q544X1</accession>
<feature type="signal peptide" evidence="1">
    <location>
        <begin position="1"/>
        <end position="26"/>
    </location>
</feature>
<feature type="chain" id="PRO_0000032992" description="Somatotropin">
    <location>
        <begin position="27"/>
        <end position="216"/>
    </location>
</feature>
<feature type="binding site" evidence="1">
    <location>
        <position position="45"/>
    </location>
    <ligand>
        <name>Zn(2+)</name>
        <dbReference type="ChEBI" id="CHEBI:29105"/>
    </ligand>
</feature>
<feature type="binding site" evidence="1">
    <location>
        <position position="198"/>
    </location>
    <ligand>
        <name>Zn(2+)</name>
        <dbReference type="ChEBI" id="CHEBI:29105"/>
    </ligand>
</feature>
<feature type="modified residue" description="Phosphoserine" evidence="2">
    <location>
        <position position="131"/>
    </location>
</feature>
<feature type="disulfide bond" evidence="1">
    <location>
        <begin position="78"/>
        <end position="189"/>
    </location>
</feature>
<feature type="disulfide bond" evidence="1">
    <location>
        <begin position="206"/>
        <end position="214"/>
    </location>
</feature>
<protein>
    <recommendedName>
        <fullName>Somatotropin</fullName>
    </recommendedName>
    <alternativeName>
        <fullName>Growth hormone</fullName>
    </alternativeName>
</protein>
<keyword id="KW-1015">Disulfide bond</keyword>
<keyword id="KW-0372">Hormone</keyword>
<keyword id="KW-0479">Metal-binding</keyword>
<keyword id="KW-0597">Phosphoprotein</keyword>
<keyword id="KW-1185">Reference proteome</keyword>
<keyword id="KW-0964">Secreted</keyword>
<keyword id="KW-0732">Signal</keyword>
<keyword id="KW-0862">Zinc</keyword>
<name>SOMA_MOUSE</name>
<evidence type="ECO:0000250" key="1"/>
<evidence type="ECO:0000250" key="2">
    <source>
        <dbReference type="UniProtKB" id="P01241"/>
    </source>
</evidence>
<evidence type="ECO:0000305" key="3"/>
<organism>
    <name type="scientific">Mus musculus</name>
    <name type="common">Mouse</name>
    <dbReference type="NCBI Taxonomy" id="10090"/>
    <lineage>
        <taxon>Eukaryota</taxon>
        <taxon>Metazoa</taxon>
        <taxon>Chordata</taxon>
        <taxon>Craniata</taxon>
        <taxon>Vertebrata</taxon>
        <taxon>Euteleostomi</taxon>
        <taxon>Mammalia</taxon>
        <taxon>Eutheria</taxon>
        <taxon>Euarchontoglires</taxon>
        <taxon>Glires</taxon>
        <taxon>Rodentia</taxon>
        <taxon>Myomorpha</taxon>
        <taxon>Muroidea</taxon>
        <taxon>Muridae</taxon>
        <taxon>Murinae</taxon>
        <taxon>Mus</taxon>
        <taxon>Mus</taxon>
    </lineage>
</organism>
<dbReference type="EMBL" id="X02891">
    <property type="protein sequence ID" value="CAA26650.1"/>
    <property type="molecule type" value="mRNA"/>
</dbReference>
<dbReference type="EMBL" id="Z46663">
    <property type="protein sequence ID" value="CAA86658.1"/>
    <property type="molecule type" value="Genomic_DNA"/>
</dbReference>
<dbReference type="EMBL" id="AK019952">
    <property type="protein sequence ID" value="BAB31931.1"/>
    <property type="molecule type" value="mRNA"/>
</dbReference>
<dbReference type="EMBL" id="AK019954">
    <property type="protein sequence ID" value="BAB31932.1"/>
    <property type="molecule type" value="mRNA"/>
</dbReference>
<dbReference type="EMBL" id="AK019956">
    <property type="protein sequence ID" value="BAB31933.1"/>
    <property type="molecule type" value="mRNA"/>
</dbReference>
<dbReference type="EMBL" id="AK019959">
    <property type="protein sequence ID" value="BAB31935.1"/>
    <property type="molecule type" value="mRNA"/>
</dbReference>
<dbReference type="EMBL" id="AK019961">
    <property type="protein sequence ID" value="BAB31937.1"/>
    <property type="molecule type" value="mRNA"/>
</dbReference>
<dbReference type="EMBL" id="AK030715">
    <property type="protein sequence ID" value="BAC27096.1"/>
    <property type="molecule type" value="mRNA"/>
</dbReference>
<dbReference type="EMBL" id="BC061157">
    <property type="protein sequence ID" value="AAH61157.1"/>
    <property type="molecule type" value="mRNA"/>
</dbReference>
<dbReference type="CCDS" id="CCDS25554.1"/>
<dbReference type="PIR" id="B23911">
    <property type="entry name" value="STMS"/>
</dbReference>
<dbReference type="RefSeq" id="NP_032143.1">
    <property type="nucleotide sequence ID" value="NM_008117.3"/>
</dbReference>
<dbReference type="SMR" id="P06880"/>
<dbReference type="BioGRID" id="199914">
    <property type="interactions" value="2"/>
</dbReference>
<dbReference type="FunCoup" id="P06880">
    <property type="interactions" value="1044"/>
</dbReference>
<dbReference type="STRING" id="10090.ENSMUSP00000099360"/>
<dbReference type="iPTMnet" id="P06880"/>
<dbReference type="PhosphoSitePlus" id="P06880"/>
<dbReference type="SwissPalm" id="P06880"/>
<dbReference type="jPOST" id="P06880"/>
<dbReference type="PaxDb" id="10090-ENSMUSP00000099360"/>
<dbReference type="PeptideAtlas" id="P06880"/>
<dbReference type="ProteomicsDB" id="261603"/>
<dbReference type="DNASU" id="14599"/>
<dbReference type="Ensembl" id="ENSMUST00000103071.4">
    <property type="protein sequence ID" value="ENSMUSP00000099360.4"/>
    <property type="gene ID" value="ENSMUSG00000020713.7"/>
</dbReference>
<dbReference type="GeneID" id="14599"/>
<dbReference type="KEGG" id="mmu:14599"/>
<dbReference type="UCSC" id="uc007lys.2">
    <property type="organism name" value="mouse"/>
</dbReference>
<dbReference type="AGR" id="MGI:95707"/>
<dbReference type="CTD" id="14599"/>
<dbReference type="MGI" id="MGI:95707">
    <property type="gene designation" value="Gh"/>
</dbReference>
<dbReference type="VEuPathDB" id="HostDB:ENSMUSG00000020713"/>
<dbReference type="eggNOG" id="ENOG502R5GJ">
    <property type="taxonomic scope" value="Eukaryota"/>
</dbReference>
<dbReference type="GeneTree" id="ENSGT00950000182818"/>
<dbReference type="HOGENOM" id="CLU_088274_2_1_1"/>
<dbReference type="InParanoid" id="P06880"/>
<dbReference type="OMA" id="VAYCYSE"/>
<dbReference type="OrthoDB" id="9925773at2759"/>
<dbReference type="PhylomeDB" id="P06880"/>
<dbReference type="TreeFam" id="TF332592"/>
<dbReference type="Reactome" id="R-MMU-1170546">
    <property type="pathway name" value="Prolactin receptor signaling"/>
</dbReference>
<dbReference type="Reactome" id="R-MMU-422085">
    <property type="pathway name" value="Synthesis, secretion, and deacylation of Ghrelin"/>
</dbReference>
<dbReference type="Reactome" id="R-MMU-982772">
    <property type="pathway name" value="Growth hormone receptor signaling"/>
</dbReference>
<dbReference type="BioGRID-ORCS" id="14599">
    <property type="hits" value="7 hits in 78 CRISPR screens"/>
</dbReference>
<dbReference type="ChiTaRS" id="Gh">
    <property type="organism name" value="mouse"/>
</dbReference>
<dbReference type="PRO" id="PR:P06880"/>
<dbReference type="Proteomes" id="UP000000589">
    <property type="component" value="Chromosome 11"/>
</dbReference>
<dbReference type="RNAct" id="P06880">
    <property type="molecule type" value="protein"/>
</dbReference>
<dbReference type="Bgee" id="ENSMUSG00000020713">
    <property type="expression patterns" value="Expressed in pituitary gland and 69 other cell types or tissues"/>
</dbReference>
<dbReference type="ExpressionAtlas" id="P06880">
    <property type="expression patterns" value="baseline and differential"/>
</dbReference>
<dbReference type="GO" id="GO:0005576">
    <property type="term" value="C:extracellular region"/>
    <property type="evidence" value="ECO:0000304"/>
    <property type="project" value="Reactome"/>
</dbReference>
<dbReference type="GO" id="GO:0005615">
    <property type="term" value="C:extracellular space"/>
    <property type="evidence" value="ECO:0000314"/>
    <property type="project" value="MGI"/>
</dbReference>
<dbReference type="GO" id="GO:0005634">
    <property type="term" value="C:nucleus"/>
    <property type="evidence" value="ECO:0000314"/>
    <property type="project" value="MGI"/>
</dbReference>
<dbReference type="GO" id="GO:0005886">
    <property type="term" value="C:plasma membrane"/>
    <property type="evidence" value="ECO:0000314"/>
    <property type="project" value="MGI"/>
</dbReference>
<dbReference type="GO" id="GO:0030141">
    <property type="term" value="C:secretory granule"/>
    <property type="evidence" value="ECO:0000314"/>
    <property type="project" value="MGI"/>
</dbReference>
<dbReference type="GO" id="GO:0005802">
    <property type="term" value="C:trans-Golgi network"/>
    <property type="evidence" value="ECO:0000314"/>
    <property type="project" value="MGI"/>
</dbReference>
<dbReference type="GO" id="GO:0005131">
    <property type="term" value="F:growth hormone receptor binding"/>
    <property type="evidence" value="ECO:0000353"/>
    <property type="project" value="MGI"/>
</dbReference>
<dbReference type="GO" id="GO:0005179">
    <property type="term" value="F:hormone activity"/>
    <property type="evidence" value="ECO:0007669"/>
    <property type="project" value="UniProtKB-KW"/>
</dbReference>
<dbReference type="GO" id="GO:0046872">
    <property type="term" value="F:metal ion binding"/>
    <property type="evidence" value="ECO:0007669"/>
    <property type="project" value="UniProtKB-KW"/>
</dbReference>
<dbReference type="GO" id="GO:0071469">
    <property type="term" value="P:cellular response to alkaline pH"/>
    <property type="evidence" value="ECO:0007669"/>
    <property type="project" value="Ensembl"/>
</dbReference>
<dbReference type="GO" id="GO:0032869">
    <property type="term" value="P:cellular response to insulin stimulus"/>
    <property type="evidence" value="ECO:0000314"/>
    <property type="project" value="MGI"/>
</dbReference>
<dbReference type="GO" id="GO:0097067">
    <property type="term" value="P:cellular response to thyroid hormone stimulus"/>
    <property type="evidence" value="ECO:0007669"/>
    <property type="project" value="Ensembl"/>
</dbReference>
<dbReference type="GO" id="GO:0007565">
    <property type="term" value="P:female pregnancy"/>
    <property type="evidence" value="ECO:0007669"/>
    <property type="project" value="Ensembl"/>
</dbReference>
<dbReference type="GO" id="GO:0048286">
    <property type="term" value="P:lung alveolus development"/>
    <property type="evidence" value="ECO:0007669"/>
    <property type="project" value="Ensembl"/>
</dbReference>
<dbReference type="GO" id="GO:0007405">
    <property type="term" value="P:neuroblast proliferation"/>
    <property type="evidence" value="ECO:0007669"/>
    <property type="project" value="Ensembl"/>
</dbReference>
<dbReference type="GO" id="GO:0010828">
    <property type="term" value="P:positive regulation of D-glucose transmembrane transport"/>
    <property type="evidence" value="ECO:0000266"/>
    <property type="project" value="MGI"/>
</dbReference>
<dbReference type="GO" id="GO:0040018">
    <property type="term" value="P:positive regulation of multicellular organism growth"/>
    <property type="evidence" value="ECO:0000316"/>
    <property type="project" value="MGI"/>
</dbReference>
<dbReference type="GO" id="GO:0050769">
    <property type="term" value="P:positive regulation of neurogenesis"/>
    <property type="evidence" value="ECO:0007669"/>
    <property type="project" value="Ensembl"/>
</dbReference>
<dbReference type="GO" id="GO:0090031">
    <property type="term" value="P:positive regulation of steroid hormone biosynthetic process"/>
    <property type="evidence" value="ECO:0007669"/>
    <property type="project" value="Ensembl"/>
</dbReference>
<dbReference type="GO" id="GO:0033143">
    <property type="term" value="P:regulation of intracellular steroid hormone receptor signaling pathway"/>
    <property type="evidence" value="ECO:0000266"/>
    <property type="project" value="MGI"/>
</dbReference>
<dbReference type="GO" id="GO:0032107">
    <property type="term" value="P:regulation of response to nutrient levels"/>
    <property type="evidence" value="ECO:0007669"/>
    <property type="project" value="Ensembl"/>
</dbReference>
<dbReference type="GO" id="GO:0034097">
    <property type="term" value="P:response to cytokine"/>
    <property type="evidence" value="ECO:0007669"/>
    <property type="project" value="Ensembl"/>
</dbReference>
<dbReference type="GO" id="GO:0032355">
    <property type="term" value="P:response to estradiol"/>
    <property type="evidence" value="ECO:0007669"/>
    <property type="project" value="Ensembl"/>
</dbReference>
<dbReference type="GO" id="GO:0032094">
    <property type="term" value="P:response to food"/>
    <property type="evidence" value="ECO:0000314"/>
    <property type="project" value="MGI"/>
</dbReference>
<dbReference type="GO" id="GO:0009416">
    <property type="term" value="P:response to light stimulus"/>
    <property type="evidence" value="ECO:0007669"/>
    <property type="project" value="Ensembl"/>
</dbReference>
<dbReference type="CDD" id="cd10285">
    <property type="entry name" value="somatotropin_like"/>
    <property type="match status" value="1"/>
</dbReference>
<dbReference type="FunFam" id="1.20.1250.10:FF:000002">
    <property type="entry name" value="Growth hormone"/>
    <property type="match status" value="1"/>
</dbReference>
<dbReference type="Gene3D" id="1.20.1250.10">
    <property type="match status" value="1"/>
</dbReference>
<dbReference type="InterPro" id="IPR009079">
    <property type="entry name" value="4_helix_cytokine-like_core"/>
</dbReference>
<dbReference type="InterPro" id="IPR034975">
    <property type="entry name" value="Somatotropin"/>
</dbReference>
<dbReference type="InterPro" id="IPR001400">
    <property type="entry name" value="Somatotropin/Prolactin"/>
</dbReference>
<dbReference type="InterPro" id="IPR018116">
    <property type="entry name" value="Somatotropin_CS"/>
</dbReference>
<dbReference type="PANTHER" id="PTHR11417:SF2">
    <property type="entry name" value="SOMATOTROPIN"/>
    <property type="match status" value="1"/>
</dbReference>
<dbReference type="PANTHER" id="PTHR11417">
    <property type="entry name" value="SOMATOTROPIN,PROLACTIN"/>
    <property type="match status" value="1"/>
</dbReference>
<dbReference type="Pfam" id="PF00103">
    <property type="entry name" value="Hormone_1"/>
    <property type="match status" value="1"/>
</dbReference>
<dbReference type="PRINTS" id="PR00836">
    <property type="entry name" value="SOMATOTROPIN"/>
</dbReference>
<dbReference type="SUPFAM" id="SSF47266">
    <property type="entry name" value="4-helical cytokines"/>
    <property type="match status" value="1"/>
</dbReference>
<dbReference type="PROSITE" id="PS00266">
    <property type="entry name" value="SOMATOTROPIN_1"/>
    <property type="match status" value="1"/>
</dbReference>
<dbReference type="PROSITE" id="PS00338">
    <property type="entry name" value="SOMATOTROPIN_2"/>
    <property type="match status" value="1"/>
</dbReference>
<comment type="function">
    <text>Plays an important role in growth control. Its major role in stimulating body growth is to stimulate the liver and other tissues to secrete IGF1. It stimulates both the differentiation and proliferation of myoblasts. It also stimulates amino acid uptake and protein synthesis in muscle and other tissues.</text>
</comment>
<comment type="subcellular location">
    <subcellularLocation>
        <location>Secreted</location>
    </subcellularLocation>
</comment>
<comment type="similarity">
    <text evidence="3">Belongs to the somatotropin/prolactin family.</text>
</comment>